<name>SPAG8_BOVIN</name>
<organism evidence="7">
    <name type="scientific">Bos taurus</name>
    <name type="common">Bovine</name>
    <dbReference type="NCBI Taxonomy" id="9913"/>
    <lineage>
        <taxon>Eukaryota</taxon>
        <taxon>Metazoa</taxon>
        <taxon>Chordata</taxon>
        <taxon>Craniata</taxon>
        <taxon>Vertebrata</taxon>
        <taxon>Euteleostomi</taxon>
        <taxon>Mammalia</taxon>
        <taxon>Eutheria</taxon>
        <taxon>Laurasiatheria</taxon>
        <taxon>Artiodactyla</taxon>
        <taxon>Ruminantia</taxon>
        <taxon>Pecora</taxon>
        <taxon>Bovidae</taxon>
        <taxon>Bovinae</taxon>
        <taxon>Bos</taxon>
    </lineage>
</organism>
<comment type="function">
    <text evidence="1 2">Microtubule inner protein (MIP) part of the dynein-decorated doublet microtubules (DMTs) in cilia axoneme, which is required for motile cilia beating (By similarity). Plays a role in spermatogenesis by enhancing the binding of CREM isoform tau to its coactivator FHL5 and increasing the FHL5-regulated transcriptional activation of CREM isoform tau (By similarity). Involved in the acrosome reaction and in binding of sperm to the zona pellucida (By similarity). Plays a role in regulation of the cell cycle by controlling progression through the G2/M phase, possibly by delaying the activation of CDK1 which is required for entry into mitosis. May play a role in fertility and microtubule formation through interaction with RANBP9 (By similarity).</text>
</comment>
<comment type="subunit">
    <text evidence="1 2 5">Microtubule inner protein component of sperm flagellar doublet microtubules (PubMed:37327785). Interacts with FHL5 (via second LIM domain) (By similarity). Interacts with RANBP9 (By similarity).</text>
</comment>
<comment type="subcellular location">
    <subcellularLocation>
        <location evidence="1">Cytoplasm</location>
    </subcellularLocation>
    <subcellularLocation>
        <location evidence="1">Nucleus</location>
    </subcellularLocation>
    <subcellularLocation>
        <location evidence="2">Cytoplasmic vesicle</location>
        <location evidence="2">Secretory vesicle</location>
        <location evidence="2">Acrosome</location>
    </subcellularLocation>
    <subcellularLocation>
        <location evidence="2">Cytoplasm</location>
        <location evidence="2">Cytoskeleton</location>
        <location evidence="2">Microtubule organizing center</location>
    </subcellularLocation>
    <subcellularLocation>
        <location evidence="2">Cytoplasm</location>
        <location evidence="2">Cytoskeleton</location>
        <location evidence="2">Spindle</location>
    </subcellularLocation>
    <subcellularLocation>
        <location evidence="4">Cytoplasm</location>
        <location evidence="4">Cytoskeleton</location>
        <location evidence="4">Cilium axoneme</location>
    </subcellularLocation>
    <subcellularLocation>
        <location evidence="5">Cytoplasm</location>
        <location evidence="5">Cytoskeleton</location>
        <location evidence="5">Flagellum axoneme</location>
    </subcellularLocation>
    <text evidence="1 2 4">In mature sperm cells, detected in the acrosomal region of the head and in the middle piece of the tail (By similarity). Localized to the nucleus and cytoplasm of spermatocytes and round spermatids while, in elongating spermatids, expressed in the cytoplasm but not in the nucleus (By similarity). During the cell cycle, localized on the microtubule-organizing center (MTOC) during prophase. In metaphase, extends along spindle microtubules. In anaphase, detected on the astral microtubules and mid-zone. In telophase, remains at the mid-zone. After cytokinesis, returns to the MTOC (By similarity). Microtubule inner protein (MIP) part of the dynein-decorated doublet microtubules (DMTs) in cilia axoneme (PubMed:34715025).</text>
</comment>
<comment type="tissue specificity">
    <text evidence="4">Expressed in trachea multiciliated cells.</text>
</comment>
<comment type="similarity">
    <text evidence="6">Belongs to the SPAG8 family.</text>
</comment>
<sequence length="484" mass="51542">METSESTDRSQSRCLDLQPSSDGLGSSSDPFSSWDGRHRSALVAATAAASAAATAASTARAAALWTKSPAPYSHGNLLTEPSSDSLTERYTGPRFTHKISHGRLGFQPAYFSHIAWNPYTTNDLSSSRGPIPGSSSGPVPGSSSSPGPDSSSDPGPSSSSGPGGSPGGSGRGPGHGPGPGGGSGQGPGGGSGQGTDLGPAIDSRHSPGHGHGPRFNFSAPVGFRNPRGDLIPNYTGCKHHCHWEPQKQSWKFLKVSEPGARGLWKPPEVEGKSTVLSETLPRGQCLLYNWEEERATNYLDQVPVMQDGSESFFFRHGHRGLLTLQPQSPTSSCTTQKDSYQPPKSHCQPIRGKREAILEMLLRQQICKEVQAEQEPTRKDSEVESVTHHDYKKELVQAGPPAPTKIHDYHTEQPETFWLERAPQLPGVSNIRTLDTPFRKNCSFSTPVPLSLEQPLPFEPESYSQHGEISSLACQGGGQGGGGG</sequence>
<proteinExistence type="evidence at protein level"/>
<gene>
    <name type="primary">SPAG8</name>
</gene>
<dbReference type="RefSeq" id="NP_001421852.1">
    <property type="nucleotide sequence ID" value="NM_001434923.1"/>
</dbReference>
<dbReference type="RefSeq" id="XP_005210137.1">
    <property type="nucleotide sequence ID" value="XM_005210080.2"/>
</dbReference>
<dbReference type="PDB" id="7RRO">
    <property type="method" value="EM"/>
    <property type="resolution" value="3.40 A"/>
    <property type="chains" value="D=1-484"/>
</dbReference>
<dbReference type="PDB" id="8OTZ">
    <property type="method" value="EM"/>
    <property type="resolution" value="3.60 A"/>
    <property type="chains" value="CW=1-484"/>
</dbReference>
<dbReference type="PDB" id="9CPB">
    <property type="method" value="EM"/>
    <property type="resolution" value="3.52 A"/>
    <property type="chains" value="7N=1-484"/>
</dbReference>
<dbReference type="PDBsum" id="7RRO"/>
<dbReference type="PDBsum" id="8OTZ"/>
<dbReference type="PDBsum" id="9CPB"/>
<dbReference type="EMDB" id="EMD-17187"/>
<dbReference type="EMDB" id="EMD-24664"/>
<dbReference type="EMDB" id="EMD-45801"/>
<dbReference type="EMDB" id="EMD-50664"/>
<dbReference type="SMR" id="E1BNS6"/>
<dbReference type="FunCoup" id="E1BNS6">
    <property type="interactions" value="253"/>
</dbReference>
<dbReference type="STRING" id="9913.ENSBTAP00000015206"/>
<dbReference type="PaxDb" id="9913-ENSBTAP00000015206"/>
<dbReference type="GeneID" id="514627"/>
<dbReference type="CTD" id="26206"/>
<dbReference type="VEuPathDB" id="HostDB:ENSBTAG00000011442"/>
<dbReference type="eggNOG" id="ENOG502S06E">
    <property type="taxonomic scope" value="Eukaryota"/>
</dbReference>
<dbReference type="HOGENOM" id="CLU_052284_0_0_1"/>
<dbReference type="InParanoid" id="E1BNS6"/>
<dbReference type="OMA" id="HCLLYNW"/>
<dbReference type="OrthoDB" id="2120499at2759"/>
<dbReference type="TreeFam" id="TF329075"/>
<dbReference type="Proteomes" id="UP000009136">
    <property type="component" value="Chromosome 8"/>
</dbReference>
<dbReference type="Bgee" id="ENSBTAG00000011442">
    <property type="expression patterns" value="Expressed in laryngeal cartilage and 103 other cell types or tissues"/>
</dbReference>
<dbReference type="GO" id="GO:0001669">
    <property type="term" value="C:acrosomal vesicle"/>
    <property type="evidence" value="ECO:0007669"/>
    <property type="project" value="UniProtKB-SubCell"/>
</dbReference>
<dbReference type="GO" id="GO:0160111">
    <property type="term" value="C:axonemal A tubule inner sheath"/>
    <property type="evidence" value="ECO:0000250"/>
    <property type="project" value="UniProtKB"/>
</dbReference>
<dbReference type="GO" id="GO:0005879">
    <property type="term" value="C:axonemal microtubule"/>
    <property type="evidence" value="ECO:0000314"/>
    <property type="project" value="UniProtKB"/>
</dbReference>
<dbReference type="GO" id="GO:0005737">
    <property type="term" value="C:cytoplasm"/>
    <property type="evidence" value="ECO:0000318"/>
    <property type="project" value="GO_Central"/>
</dbReference>
<dbReference type="GO" id="GO:0005815">
    <property type="term" value="C:microtubule organizing center"/>
    <property type="evidence" value="ECO:0007669"/>
    <property type="project" value="UniProtKB-SubCell"/>
</dbReference>
<dbReference type="GO" id="GO:0005634">
    <property type="term" value="C:nucleus"/>
    <property type="evidence" value="ECO:0000318"/>
    <property type="project" value="GO_Central"/>
</dbReference>
<dbReference type="GO" id="GO:0036126">
    <property type="term" value="C:sperm flagellum"/>
    <property type="evidence" value="ECO:0000250"/>
    <property type="project" value="UniProtKB"/>
</dbReference>
<dbReference type="GO" id="GO:0005819">
    <property type="term" value="C:spindle"/>
    <property type="evidence" value="ECO:0007669"/>
    <property type="project" value="UniProtKB-SubCell"/>
</dbReference>
<dbReference type="GO" id="GO:0008017">
    <property type="term" value="F:microtubule binding"/>
    <property type="evidence" value="ECO:0007669"/>
    <property type="project" value="InterPro"/>
</dbReference>
<dbReference type="GO" id="GO:0030154">
    <property type="term" value="P:cell differentiation"/>
    <property type="evidence" value="ECO:0007669"/>
    <property type="project" value="UniProtKB-KW"/>
</dbReference>
<dbReference type="GO" id="GO:0030317">
    <property type="term" value="P:flagellated sperm motility"/>
    <property type="evidence" value="ECO:0000250"/>
    <property type="project" value="UniProtKB"/>
</dbReference>
<dbReference type="GO" id="GO:0045944">
    <property type="term" value="P:positive regulation of transcription by RNA polymerase II"/>
    <property type="evidence" value="ECO:0000318"/>
    <property type="project" value="GO_Central"/>
</dbReference>
<dbReference type="GO" id="GO:0007338">
    <property type="term" value="P:single fertilization"/>
    <property type="evidence" value="ECO:0007669"/>
    <property type="project" value="UniProtKB-KW"/>
</dbReference>
<dbReference type="GO" id="GO:0007283">
    <property type="term" value="P:spermatogenesis"/>
    <property type="evidence" value="ECO:0007669"/>
    <property type="project" value="UniProtKB-KW"/>
</dbReference>
<dbReference type="InterPro" id="IPR026124">
    <property type="entry name" value="Sperm-assoc_Ag8"/>
</dbReference>
<dbReference type="PANTHER" id="PTHR15510">
    <property type="entry name" value="SPERM-ASSOCIATED ANTIGEN 8"/>
    <property type="match status" value="1"/>
</dbReference>
<dbReference type="PANTHER" id="PTHR15510:SF5">
    <property type="entry name" value="SPERM-ASSOCIATED ANTIGEN 8"/>
    <property type="match status" value="1"/>
</dbReference>
<dbReference type="Pfam" id="PF22584">
    <property type="entry name" value="CFAP143"/>
    <property type="match status" value="1"/>
</dbReference>
<feature type="chain" id="PRO_0000456165" description="Sperm-associated antigen 8">
    <location>
        <begin position="1"/>
        <end position="484"/>
    </location>
</feature>
<feature type="region of interest" description="Disordered" evidence="3">
    <location>
        <begin position="1"/>
        <end position="32"/>
    </location>
</feature>
<feature type="region of interest" description="Disordered" evidence="3">
    <location>
        <begin position="123"/>
        <end position="221"/>
    </location>
</feature>
<feature type="region of interest" description="Disordered" evidence="3">
    <location>
        <begin position="324"/>
        <end position="348"/>
    </location>
</feature>
<feature type="region of interest" description="Mn 1" evidence="2">
    <location>
        <begin position="332"/>
        <end position="345"/>
    </location>
</feature>
<feature type="region of interest" description="Mn 2" evidence="2">
    <location>
        <begin position="384"/>
        <end position="398"/>
    </location>
</feature>
<feature type="region of interest" description="Disordered" evidence="3">
    <location>
        <begin position="455"/>
        <end position="484"/>
    </location>
</feature>
<feature type="compositionally biased region" description="Basic and acidic residues" evidence="3">
    <location>
        <begin position="1"/>
        <end position="11"/>
    </location>
</feature>
<feature type="compositionally biased region" description="Low complexity" evidence="3">
    <location>
        <begin position="20"/>
        <end position="32"/>
    </location>
</feature>
<feature type="compositionally biased region" description="Low complexity" evidence="3">
    <location>
        <begin position="125"/>
        <end position="160"/>
    </location>
</feature>
<feature type="compositionally biased region" description="Gly residues" evidence="3">
    <location>
        <begin position="161"/>
        <end position="195"/>
    </location>
</feature>
<feature type="compositionally biased region" description="Polar residues" evidence="3">
    <location>
        <begin position="324"/>
        <end position="339"/>
    </location>
</feature>
<feature type="compositionally biased region" description="Gly residues" evidence="3">
    <location>
        <begin position="475"/>
        <end position="484"/>
    </location>
</feature>
<keyword id="KW-0002">3D-structure</keyword>
<keyword id="KW-0131">Cell cycle</keyword>
<keyword id="KW-0966">Cell projection</keyword>
<keyword id="KW-0969">Cilium</keyword>
<keyword id="KW-0963">Cytoplasm</keyword>
<keyword id="KW-0968">Cytoplasmic vesicle</keyword>
<keyword id="KW-0206">Cytoskeleton</keyword>
<keyword id="KW-0221">Differentiation</keyword>
<keyword id="KW-0278">Fertilization</keyword>
<keyword id="KW-0282">Flagellum</keyword>
<keyword id="KW-0539">Nucleus</keyword>
<keyword id="KW-1185">Reference proteome</keyword>
<keyword id="KW-0744">Spermatogenesis</keyword>
<reference key="1">
    <citation type="journal article" date="2009" name="Genome Biol.">
        <title>A whole-genome assembly of the domestic cow, Bos taurus.</title>
        <authorList>
            <person name="Zimin A.V."/>
            <person name="Delcher A.L."/>
            <person name="Florea L."/>
            <person name="Kelley D.R."/>
            <person name="Schatz M.C."/>
            <person name="Puiu D."/>
            <person name="Hanrahan F."/>
            <person name="Pertea G."/>
            <person name="Van Tassell C.P."/>
            <person name="Sonstegard T.S."/>
            <person name="Marcais G."/>
            <person name="Roberts M."/>
            <person name="Subramanian P."/>
            <person name="Yorke J.A."/>
            <person name="Salzberg S.L."/>
        </authorList>
    </citation>
    <scope>NUCLEOTIDE SEQUENCE [LARGE SCALE GENOMIC DNA]</scope>
    <source>
        <strain>Hereford</strain>
    </source>
</reference>
<reference evidence="8" key="2">
    <citation type="journal article" date="2021" name="Cell">
        <title>De novo identification of mammalian ciliary motility proteins using cryo-EM.</title>
        <authorList>
            <person name="Gui M."/>
            <person name="Farley H."/>
            <person name="Anujan P."/>
            <person name="Anderson J.R."/>
            <person name="Maxwell D.W."/>
            <person name="Whitchurch J.B."/>
            <person name="Botsch J.J."/>
            <person name="Qiu T."/>
            <person name="Meleppattu S."/>
            <person name="Singh S.K."/>
            <person name="Zhang Q."/>
            <person name="Thompson J."/>
            <person name="Lucas J.S."/>
            <person name="Bingle C.D."/>
            <person name="Norris D.P."/>
            <person name="Roy S."/>
            <person name="Brown A."/>
        </authorList>
    </citation>
    <scope>STRUCTURE BY ELECTRON MICROSCOPY (3.40 ANGSTROMS)</scope>
    <scope>SUBCELLULAR LOCATION</scope>
</reference>
<reference evidence="9" key="3">
    <citation type="journal article" date="2023" name="Cell">
        <title>Structural specializations of the sperm tail.</title>
        <authorList>
            <person name="Leung M.R."/>
            <person name="Zeng J."/>
            <person name="Wang X."/>
            <person name="Roelofs M.C."/>
            <person name="Huang W."/>
            <person name="Zenezini Chiozzi R."/>
            <person name="Hevler J.F."/>
            <person name="Heck A.J.R."/>
            <person name="Dutcher S.K."/>
            <person name="Brown A."/>
            <person name="Zhang R."/>
            <person name="Zeev-Ben-Mordehai T."/>
        </authorList>
    </citation>
    <scope>STRUCTURE BY ELECTRON MICROSCOPY (3.60 ANGSTROMS)</scope>
    <scope>SUBUNIT</scope>
    <scope>SUBCELLULAR LOCATION</scope>
</reference>
<accession>E1BNS6</accession>
<evidence type="ECO:0000250" key="1">
    <source>
        <dbReference type="UniProtKB" id="Q3V0Q6"/>
    </source>
</evidence>
<evidence type="ECO:0000250" key="2">
    <source>
        <dbReference type="UniProtKB" id="Q99932"/>
    </source>
</evidence>
<evidence type="ECO:0000256" key="3">
    <source>
        <dbReference type="SAM" id="MobiDB-lite"/>
    </source>
</evidence>
<evidence type="ECO:0000269" key="4">
    <source>
    </source>
</evidence>
<evidence type="ECO:0000269" key="5">
    <source>
    </source>
</evidence>
<evidence type="ECO:0000305" key="6"/>
<evidence type="ECO:0000312" key="7">
    <source>
        <dbReference type="Proteomes" id="UP000009136"/>
    </source>
</evidence>
<evidence type="ECO:0007744" key="8">
    <source>
        <dbReference type="PDB" id="7RRO"/>
    </source>
</evidence>
<evidence type="ECO:0007744" key="9">
    <source>
        <dbReference type="PDB" id="8OTZ"/>
    </source>
</evidence>
<protein>
    <recommendedName>
        <fullName>Sperm-associated antigen 8</fullName>
    </recommendedName>
</protein>